<organism>
    <name type="scientific">Emericella nidulans (strain FGSC A4 / ATCC 38163 / CBS 112.46 / NRRL 194 / M139)</name>
    <name type="common">Aspergillus nidulans</name>
    <dbReference type="NCBI Taxonomy" id="227321"/>
    <lineage>
        <taxon>Eukaryota</taxon>
        <taxon>Fungi</taxon>
        <taxon>Dikarya</taxon>
        <taxon>Ascomycota</taxon>
        <taxon>Pezizomycotina</taxon>
        <taxon>Eurotiomycetes</taxon>
        <taxon>Eurotiomycetidae</taxon>
        <taxon>Eurotiales</taxon>
        <taxon>Aspergillaceae</taxon>
        <taxon>Aspergillus</taxon>
        <taxon>Aspergillus subgen. Nidulantes</taxon>
    </lineage>
</organism>
<protein>
    <recommendedName>
        <fullName evidence="1">Chromatin-remodeling ATPase INO80</fullName>
        <ecNumber evidence="1">3.6.4.-</ecNumber>
    </recommendedName>
</protein>
<evidence type="ECO:0000250" key="1">
    <source>
        <dbReference type="UniProtKB" id="P53115"/>
    </source>
</evidence>
<evidence type="ECO:0000250" key="2">
    <source>
        <dbReference type="UniProtKB" id="Q9ULG1"/>
    </source>
</evidence>
<evidence type="ECO:0000255" key="3"/>
<evidence type="ECO:0000255" key="4">
    <source>
        <dbReference type="PROSITE-ProRule" id="PRU00541"/>
    </source>
</evidence>
<evidence type="ECO:0000255" key="5">
    <source>
        <dbReference type="PROSITE-ProRule" id="PRU00542"/>
    </source>
</evidence>
<evidence type="ECO:0000255" key="6">
    <source>
        <dbReference type="PROSITE-ProRule" id="PRU00746"/>
    </source>
</evidence>
<evidence type="ECO:0000256" key="7">
    <source>
        <dbReference type="SAM" id="MobiDB-lite"/>
    </source>
</evidence>
<evidence type="ECO:0000305" key="8"/>
<name>INO80_EMENI</name>
<reference key="1">
    <citation type="journal article" date="2005" name="Nature">
        <title>Sequencing of Aspergillus nidulans and comparative analysis with A. fumigatus and A. oryzae.</title>
        <authorList>
            <person name="Galagan J.E."/>
            <person name="Calvo S.E."/>
            <person name="Cuomo C."/>
            <person name="Ma L.-J."/>
            <person name="Wortman J.R."/>
            <person name="Batzoglou S."/>
            <person name="Lee S.-I."/>
            <person name="Bastuerkmen M."/>
            <person name="Spevak C.C."/>
            <person name="Clutterbuck J."/>
            <person name="Kapitonov V."/>
            <person name="Jurka J."/>
            <person name="Scazzocchio C."/>
            <person name="Farman M.L."/>
            <person name="Butler J."/>
            <person name="Purcell S."/>
            <person name="Harris S."/>
            <person name="Braus G.H."/>
            <person name="Draht O."/>
            <person name="Busch S."/>
            <person name="D'Enfert C."/>
            <person name="Bouchier C."/>
            <person name="Goldman G.H."/>
            <person name="Bell-Pedersen D."/>
            <person name="Griffiths-Jones S."/>
            <person name="Doonan J.H."/>
            <person name="Yu J."/>
            <person name="Vienken K."/>
            <person name="Pain A."/>
            <person name="Freitag M."/>
            <person name="Selker E.U."/>
            <person name="Archer D.B."/>
            <person name="Penalva M.A."/>
            <person name="Oakley B.R."/>
            <person name="Momany M."/>
            <person name="Tanaka T."/>
            <person name="Kumagai T."/>
            <person name="Asai K."/>
            <person name="Machida M."/>
            <person name="Nierman W.C."/>
            <person name="Denning D.W."/>
            <person name="Caddick M.X."/>
            <person name="Hynes M."/>
            <person name="Paoletti M."/>
            <person name="Fischer R."/>
            <person name="Miller B.L."/>
            <person name="Dyer P.S."/>
            <person name="Sachs M.S."/>
            <person name="Osmani S.A."/>
            <person name="Birren B.W."/>
        </authorList>
    </citation>
    <scope>NUCLEOTIDE SEQUENCE [LARGE SCALE GENOMIC DNA]</scope>
    <source>
        <strain>FGSC A4 / ATCC 38163 / CBS 112.46 / NRRL 194 / M139</strain>
    </source>
</reference>
<reference key="2">
    <citation type="journal article" date="2009" name="Fungal Genet. Biol.">
        <title>The 2008 update of the Aspergillus nidulans genome annotation: a community effort.</title>
        <authorList>
            <person name="Wortman J.R."/>
            <person name="Gilsenan J.M."/>
            <person name="Joardar V."/>
            <person name="Deegan J."/>
            <person name="Clutterbuck J."/>
            <person name="Andersen M.R."/>
            <person name="Archer D."/>
            <person name="Bencina M."/>
            <person name="Braus G."/>
            <person name="Coutinho P."/>
            <person name="von Dohren H."/>
            <person name="Doonan J."/>
            <person name="Driessen A.J."/>
            <person name="Durek P."/>
            <person name="Espeso E."/>
            <person name="Fekete E."/>
            <person name="Flipphi M."/>
            <person name="Estrada C.G."/>
            <person name="Geysens S."/>
            <person name="Goldman G."/>
            <person name="de Groot P.W."/>
            <person name="Hansen K."/>
            <person name="Harris S.D."/>
            <person name="Heinekamp T."/>
            <person name="Helmstaedt K."/>
            <person name="Henrissat B."/>
            <person name="Hofmann G."/>
            <person name="Homan T."/>
            <person name="Horio T."/>
            <person name="Horiuchi H."/>
            <person name="James S."/>
            <person name="Jones M."/>
            <person name="Karaffa L."/>
            <person name="Karanyi Z."/>
            <person name="Kato M."/>
            <person name="Keller N."/>
            <person name="Kelly D.E."/>
            <person name="Kiel J.A."/>
            <person name="Kim J.M."/>
            <person name="van der Klei I.J."/>
            <person name="Klis F.M."/>
            <person name="Kovalchuk A."/>
            <person name="Krasevec N."/>
            <person name="Kubicek C.P."/>
            <person name="Liu B."/>
            <person name="Maccabe A."/>
            <person name="Meyer V."/>
            <person name="Mirabito P."/>
            <person name="Miskei M."/>
            <person name="Mos M."/>
            <person name="Mullins J."/>
            <person name="Nelson D.R."/>
            <person name="Nielsen J."/>
            <person name="Oakley B.R."/>
            <person name="Osmani S.A."/>
            <person name="Pakula T."/>
            <person name="Paszewski A."/>
            <person name="Paulsen I."/>
            <person name="Pilsyk S."/>
            <person name="Pocsi I."/>
            <person name="Punt P.J."/>
            <person name="Ram A.F."/>
            <person name="Ren Q."/>
            <person name="Robellet X."/>
            <person name="Robson G."/>
            <person name="Seiboth B."/>
            <person name="van Solingen P."/>
            <person name="Specht T."/>
            <person name="Sun J."/>
            <person name="Taheri-Talesh N."/>
            <person name="Takeshita N."/>
            <person name="Ussery D."/>
            <person name="vanKuyk P.A."/>
            <person name="Visser H."/>
            <person name="van de Vondervoort P.J."/>
            <person name="de Vries R.P."/>
            <person name="Walton J."/>
            <person name="Xiang X."/>
            <person name="Xiong Y."/>
            <person name="Zeng A.P."/>
            <person name="Brandt B.W."/>
            <person name="Cornell M.J."/>
            <person name="van den Hondel C.A."/>
            <person name="Visser J."/>
            <person name="Oliver S.G."/>
            <person name="Turner G."/>
        </authorList>
    </citation>
    <scope>GENOME REANNOTATION</scope>
    <source>
        <strain>FGSC A4 / ATCC 38163 / CBS 112.46 / NRRL 194 / M139</strain>
    </source>
</reference>
<feature type="chain" id="PRO_0000074324" description="Chromatin-remodeling ATPase INO80">
    <location>
        <begin position="1"/>
        <end position="1612"/>
    </location>
</feature>
<feature type="domain" description="DBINO" evidence="6">
    <location>
        <begin position="570"/>
        <end position="695"/>
    </location>
</feature>
<feature type="domain" description="Helicase ATP-binding" evidence="4">
    <location>
        <begin position="810"/>
        <end position="982"/>
    </location>
</feature>
<feature type="domain" description="Helicase C-terminal" evidence="5">
    <location>
        <begin position="1325"/>
        <end position="1485"/>
    </location>
</feature>
<feature type="region of interest" description="Disordered" evidence="7">
    <location>
        <begin position="1"/>
        <end position="288"/>
    </location>
</feature>
<feature type="region of interest" description="Disordered" evidence="7">
    <location>
        <begin position="387"/>
        <end position="409"/>
    </location>
</feature>
<feature type="region of interest" description="Disordered" evidence="7">
    <location>
        <begin position="438"/>
        <end position="554"/>
    </location>
</feature>
<feature type="region of interest" description="Disordered" evidence="7">
    <location>
        <begin position="607"/>
        <end position="626"/>
    </location>
</feature>
<feature type="region of interest" description="Disordered" evidence="7">
    <location>
        <begin position="1513"/>
        <end position="1612"/>
    </location>
</feature>
<feature type="coiled-coil region" evidence="3">
    <location>
        <begin position="379"/>
        <end position="455"/>
    </location>
</feature>
<feature type="coiled-coil region" evidence="3">
    <location>
        <begin position="612"/>
        <end position="684"/>
    </location>
</feature>
<feature type="short sequence motif" description="DEAQ box">
    <location>
        <begin position="933"/>
        <end position="936"/>
    </location>
</feature>
<feature type="compositionally biased region" description="Polar residues" evidence="7">
    <location>
        <begin position="10"/>
        <end position="25"/>
    </location>
</feature>
<feature type="compositionally biased region" description="Low complexity" evidence="7">
    <location>
        <begin position="113"/>
        <end position="126"/>
    </location>
</feature>
<feature type="compositionally biased region" description="Basic and acidic residues" evidence="7">
    <location>
        <begin position="132"/>
        <end position="148"/>
    </location>
</feature>
<feature type="compositionally biased region" description="Basic and acidic residues" evidence="7">
    <location>
        <begin position="246"/>
        <end position="267"/>
    </location>
</feature>
<feature type="compositionally biased region" description="Basic and acidic residues" evidence="7">
    <location>
        <begin position="501"/>
        <end position="512"/>
    </location>
</feature>
<feature type="compositionally biased region" description="Basic and acidic residues" evidence="7">
    <location>
        <begin position="529"/>
        <end position="549"/>
    </location>
</feature>
<feature type="compositionally biased region" description="Basic and acidic residues" evidence="7">
    <location>
        <begin position="610"/>
        <end position="624"/>
    </location>
</feature>
<feature type="compositionally biased region" description="Basic residues" evidence="7">
    <location>
        <begin position="1523"/>
        <end position="1533"/>
    </location>
</feature>
<feature type="compositionally biased region" description="Basic and acidic residues" evidence="7">
    <location>
        <begin position="1534"/>
        <end position="1545"/>
    </location>
</feature>
<feature type="compositionally biased region" description="Polar residues" evidence="7">
    <location>
        <begin position="1561"/>
        <end position="1575"/>
    </location>
</feature>
<feature type="compositionally biased region" description="Basic residues" evidence="7">
    <location>
        <begin position="1579"/>
        <end position="1594"/>
    </location>
</feature>
<feature type="compositionally biased region" description="Basic and acidic residues" evidence="7">
    <location>
        <begin position="1595"/>
        <end position="1604"/>
    </location>
</feature>
<feature type="binding site" evidence="4">
    <location>
        <begin position="823"/>
        <end position="830"/>
    </location>
    <ligand>
        <name>ATP</name>
        <dbReference type="ChEBI" id="CHEBI:30616"/>
    </ligand>
</feature>
<sequence>MTGAPPYHPQSPTQQSHYAGYSPSNKPRHYYPNSEHYQQQPPQTPPAFPQPNLARSPHYSHAPSPLPGALPPLNGGAPTPAHPSDPSPQYQAHSAAGTPQYPLPRPYSGSLLPASGTSPYGPSTPSHAHPSSRPDSHAHVSPKKEPESHFAVNHGAPAYSVMREPQASPPKEAKPARAADPMSFASILSGPTEEQAPPKIQSPTPGLGTIHSAVPAANATSLNPPPASFHPKVGDIEPVPPVSAPRLEKKPSADKRQRNTEKEDLKSAENPTNGVTEPPKILRPPRRIMSEKETEMVNKYMVEIDNAEKSDVEAPGFEQERERYILKGKKRALDVERAESIRRKRRRHDYLLKLGKSFEKQANAGMDRFRYANEASVISEVQAKEIQDEKERKKDMQRKRRRENTVRMEMQKKLEAELKANETQDSAEKAKFLREAERAQRKIKTTKRALEGVTEPEEIGEITPLAPNLEGGITSSFHIGRSSPSRRKTGRGGPVTRPKKSKEQKQAEKDAAEAAYAAMENDEPLPLAPREDPRKESLKKDAKGGRSKEATPVPVSTYESKGYNQIYEQIWRDIARKDIPKVYRTKVNSLSTRQENLRKTAQLASKQSRKWQERTNKSMKDTQARAKRTMREMMSFWKRNEREERDLRRLAEKQELESAKRAEAEREANRQKRKLNFLISQTELYSHFIGRKIPGAGGESGDAGVQGTEAMDLTPGAGAKVTNFEDLDFDAEDDTALRQAAMANAQSAVQKAQERARAFDDPNKSTMDTMDDSELNFQNPTSLGDIEISQPTMLTAKLKEYQLKGLNWLVNLYEQGINGILADEMGLGKTIQSISVMAYLAEVHNIWGPFLVIAPASTLHNWQQEITKFVPNIKVLPYWGNAKDRKILRKFWDRKHITYTKESEFHVLVTSYQLVVLDAQYFQKVKWQYMILDEAQAIKSSQSSRWKSLLGFHCRNRLLLTGTPIQNNMQELWALLHFIMPTLFDSHDEFSEWFSKDIESHAQSNTKLNEDQLRRLHMILKPFMLRRVKKHVQQELGDKVEKDVFCDLTYRQRALYTNLRNRVSIMDLIEKAAVGDETDSTTLMNLVMQFRKVCNHPDLFERAETKSPFSLAHFAETASFNIKQSIEDDGAFSFLRFVDTSVGEAFNYSHQGVFERALRRRGQTNRLSRLSVVYDEDESSTATLPHTLFNIVDRNDRQAVYDIAVEGHMRELMNVSRSVFEQEGLNVIEPCAGPAASAPPITLVSSGQEALIETQDALFNVPVQHALFGTPSKAMEEQIIEQQLDPTPYSLPPMLPEPISTKGRYTHIEVPSMRRFVTDSGKLAKLDELLRELKAGGHRVLLYFQMTRMIDLMEEYLTYRNYKYCRLDGSTKLEDRRDTVADFQQRPDIFVFLLSTRAGGLGINLTAADTVIFYDSDWNPTIDSQAMDRAHRLGQTRQVTVYRLITRSTIEERIRKRALQKEEVQRVVISGGAAGGVDFNTRNRDSKTKDIAMWLADDEQAELIEQKEREALERGETFGASKGGKKNAQKRKRDVTLDDMYHEGEGNFDDASAKPSGAATPVSTAENIGTPSASTPVPKRGRGRGGKGTAKRAKTTKERLRLIDGDGGLGSG</sequence>
<proteinExistence type="inferred from homology"/>
<dbReference type="EC" id="3.6.4.-" evidence="1"/>
<dbReference type="EMBL" id="AACD01000038">
    <property type="protein sequence ID" value="EAA64396.1"/>
    <property type="molecule type" value="Genomic_DNA"/>
</dbReference>
<dbReference type="EMBL" id="BN001307">
    <property type="protein sequence ID" value="CBF86533.1"/>
    <property type="molecule type" value="Genomic_DNA"/>
</dbReference>
<dbReference type="RefSeq" id="XP_659889.1">
    <property type="nucleotide sequence ID" value="XM_654797.1"/>
</dbReference>
<dbReference type="SMR" id="Q5BAZ5"/>
<dbReference type="FunCoup" id="Q5BAZ5">
    <property type="interactions" value="1063"/>
</dbReference>
<dbReference type="STRING" id="227321.Q5BAZ5"/>
<dbReference type="EnsemblFungi" id="CBF86533">
    <property type="protein sequence ID" value="CBF86533"/>
    <property type="gene ID" value="ANIA_02285"/>
</dbReference>
<dbReference type="KEGG" id="ani:ANIA_02285"/>
<dbReference type="eggNOG" id="KOG0388">
    <property type="taxonomic scope" value="Eukaryota"/>
</dbReference>
<dbReference type="HOGENOM" id="CLU_000315_26_0_1"/>
<dbReference type="InParanoid" id="Q5BAZ5"/>
<dbReference type="OMA" id="NLLGFHC"/>
<dbReference type="OrthoDB" id="372624at2759"/>
<dbReference type="Proteomes" id="UP000000560">
    <property type="component" value="Chromosome VII"/>
</dbReference>
<dbReference type="GO" id="GO:0000775">
    <property type="term" value="C:chromosome, centromeric region"/>
    <property type="evidence" value="ECO:0007669"/>
    <property type="project" value="EnsemblFungi"/>
</dbReference>
<dbReference type="GO" id="GO:0000781">
    <property type="term" value="C:chromosome, telomeric region"/>
    <property type="evidence" value="ECO:0007669"/>
    <property type="project" value="GOC"/>
</dbReference>
<dbReference type="GO" id="GO:0031011">
    <property type="term" value="C:Ino80 complex"/>
    <property type="evidence" value="ECO:0000318"/>
    <property type="project" value="GO_Central"/>
</dbReference>
<dbReference type="GO" id="GO:0005524">
    <property type="term" value="F:ATP binding"/>
    <property type="evidence" value="ECO:0007669"/>
    <property type="project" value="UniProtKB-KW"/>
</dbReference>
<dbReference type="GO" id="GO:0016887">
    <property type="term" value="F:ATP hydrolysis activity"/>
    <property type="evidence" value="ECO:0000318"/>
    <property type="project" value="GO_Central"/>
</dbReference>
<dbReference type="GO" id="GO:0140658">
    <property type="term" value="F:ATP-dependent chromatin remodeler activity"/>
    <property type="evidence" value="ECO:0007669"/>
    <property type="project" value="InterPro"/>
</dbReference>
<dbReference type="GO" id="GO:0003677">
    <property type="term" value="F:DNA binding"/>
    <property type="evidence" value="ECO:0007669"/>
    <property type="project" value="UniProtKB-KW"/>
</dbReference>
<dbReference type="GO" id="GO:0042393">
    <property type="term" value="F:histone binding"/>
    <property type="evidence" value="ECO:0000318"/>
    <property type="project" value="GO_Central"/>
</dbReference>
<dbReference type="GO" id="GO:0034080">
    <property type="term" value="P:CENP-A containing chromatin assembly"/>
    <property type="evidence" value="ECO:0007669"/>
    <property type="project" value="EnsemblFungi"/>
</dbReference>
<dbReference type="GO" id="GO:0006338">
    <property type="term" value="P:chromatin remodeling"/>
    <property type="evidence" value="ECO:0000318"/>
    <property type="project" value="GO_Central"/>
</dbReference>
<dbReference type="GO" id="GO:0006281">
    <property type="term" value="P:DNA repair"/>
    <property type="evidence" value="ECO:0000318"/>
    <property type="project" value="GO_Central"/>
</dbReference>
<dbReference type="GO" id="GO:0045944">
    <property type="term" value="P:positive regulation of transcription by RNA polymerase II"/>
    <property type="evidence" value="ECO:0007669"/>
    <property type="project" value="EnsemblFungi"/>
</dbReference>
<dbReference type="GO" id="GO:0032006">
    <property type="term" value="P:regulation of TOR signaling"/>
    <property type="evidence" value="ECO:0007669"/>
    <property type="project" value="EnsemblFungi"/>
</dbReference>
<dbReference type="GO" id="GO:0031509">
    <property type="term" value="P:subtelomeric heterochromatin formation"/>
    <property type="evidence" value="ECO:0007669"/>
    <property type="project" value="EnsemblFungi"/>
</dbReference>
<dbReference type="GO" id="GO:0000722">
    <property type="term" value="P:telomere maintenance via recombination"/>
    <property type="evidence" value="ECO:0007669"/>
    <property type="project" value="EnsemblFungi"/>
</dbReference>
<dbReference type="GO" id="GO:0006366">
    <property type="term" value="P:transcription by RNA polymerase II"/>
    <property type="evidence" value="ECO:0007669"/>
    <property type="project" value="EnsemblFungi"/>
</dbReference>
<dbReference type="CDD" id="cd18002">
    <property type="entry name" value="DEXQc_INO80"/>
    <property type="match status" value="1"/>
</dbReference>
<dbReference type="CDD" id="cd18793">
    <property type="entry name" value="SF2_C_SNF"/>
    <property type="match status" value="1"/>
</dbReference>
<dbReference type="FunFam" id="3.40.50.10810:FF:000006">
    <property type="entry name" value="Putative DNA helicase INO80"/>
    <property type="match status" value="1"/>
</dbReference>
<dbReference type="FunFam" id="3.40.50.300:FF:001269">
    <property type="entry name" value="SNF2 family helicase/ATPase"/>
    <property type="match status" value="1"/>
</dbReference>
<dbReference type="Gene3D" id="3.40.50.300">
    <property type="entry name" value="P-loop containing nucleotide triphosphate hydrolases"/>
    <property type="match status" value="1"/>
</dbReference>
<dbReference type="Gene3D" id="3.40.50.10810">
    <property type="entry name" value="Tandem AAA-ATPase domain"/>
    <property type="match status" value="1"/>
</dbReference>
<dbReference type="InterPro" id="IPR020838">
    <property type="entry name" value="DBINO"/>
</dbReference>
<dbReference type="InterPro" id="IPR031047">
    <property type="entry name" value="DEXQc_INO80"/>
</dbReference>
<dbReference type="InterPro" id="IPR014001">
    <property type="entry name" value="Helicase_ATP-bd"/>
</dbReference>
<dbReference type="InterPro" id="IPR001650">
    <property type="entry name" value="Helicase_C-like"/>
</dbReference>
<dbReference type="InterPro" id="IPR050520">
    <property type="entry name" value="INO80/SWR1_helicase"/>
</dbReference>
<dbReference type="InterPro" id="IPR027417">
    <property type="entry name" value="P-loop_NTPase"/>
</dbReference>
<dbReference type="InterPro" id="IPR038718">
    <property type="entry name" value="SNF2-like_sf"/>
</dbReference>
<dbReference type="InterPro" id="IPR049730">
    <property type="entry name" value="SNF2/RAD54-like_C"/>
</dbReference>
<dbReference type="InterPro" id="IPR000330">
    <property type="entry name" value="SNF2_N"/>
</dbReference>
<dbReference type="PANTHER" id="PTHR45685:SF2">
    <property type="entry name" value="CHROMATIN-REMODELING ATPASE INO80"/>
    <property type="match status" value="1"/>
</dbReference>
<dbReference type="PANTHER" id="PTHR45685">
    <property type="entry name" value="HELICASE SRCAP-RELATED"/>
    <property type="match status" value="1"/>
</dbReference>
<dbReference type="Pfam" id="PF13892">
    <property type="entry name" value="DBINO"/>
    <property type="match status" value="1"/>
</dbReference>
<dbReference type="Pfam" id="PF00271">
    <property type="entry name" value="Helicase_C"/>
    <property type="match status" value="1"/>
</dbReference>
<dbReference type="Pfam" id="PF00176">
    <property type="entry name" value="SNF2-rel_dom"/>
    <property type="match status" value="1"/>
</dbReference>
<dbReference type="SMART" id="SM00487">
    <property type="entry name" value="DEXDc"/>
    <property type="match status" value="1"/>
</dbReference>
<dbReference type="SMART" id="SM00490">
    <property type="entry name" value="HELICc"/>
    <property type="match status" value="1"/>
</dbReference>
<dbReference type="SUPFAM" id="SSF52540">
    <property type="entry name" value="P-loop containing nucleoside triphosphate hydrolases"/>
    <property type="match status" value="2"/>
</dbReference>
<dbReference type="PROSITE" id="PS51413">
    <property type="entry name" value="DBINO"/>
    <property type="match status" value="1"/>
</dbReference>
<dbReference type="PROSITE" id="PS51192">
    <property type="entry name" value="HELICASE_ATP_BIND_1"/>
    <property type="match status" value="1"/>
</dbReference>
<dbReference type="PROSITE" id="PS51194">
    <property type="entry name" value="HELICASE_CTER"/>
    <property type="match status" value="1"/>
</dbReference>
<gene>
    <name type="primary">ino80</name>
    <name type="ORF">AN2285</name>
</gene>
<keyword id="KW-0010">Activator</keyword>
<keyword id="KW-0067">ATP-binding</keyword>
<keyword id="KW-0175">Coiled coil</keyword>
<keyword id="KW-0227">DNA damage</keyword>
<keyword id="KW-0234">DNA repair</keyword>
<keyword id="KW-0238">DNA-binding</keyword>
<keyword id="KW-0378">Hydrolase</keyword>
<keyword id="KW-0547">Nucleotide-binding</keyword>
<keyword id="KW-0539">Nucleus</keyword>
<keyword id="KW-1185">Reference proteome</keyword>
<keyword id="KW-0804">Transcription</keyword>
<keyword id="KW-0805">Transcription regulation</keyword>
<accession>Q5BAZ5</accession>
<accession>C8VN32</accession>
<comment type="function">
    <text evidence="6">ATPase component of the INO80 complex which remodels chromatin by shifting nucleosomes and is involved in DNA repair.</text>
</comment>
<comment type="catalytic activity">
    <reaction evidence="1">
        <text>ATP + H2O = ADP + phosphate + H(+)</text>
        <dbReference type="Rhea" id="RHEA:13065"/>
        <dbReference type="ChEBI" id="CHEBI:15377"/>
        <dbReference type="ChEBI" id="CHEBI:15378"/>
        <dbReference type="ChEBI" id="CHEBI:30616"/>
        <dbReference type="ChEBI" id="CHEBI:43474"/>
        <dbReference type="ChEBI" id="CHEBI:456216"/>
    </reaction>
</comment>
<comment type="subunit">
    <text evidence="6">Component of the INO80 chromatin-remodeling complex.</text>
</comment>
<comment type="subcellular location">
    <subcellularLocation>
        <location evidence="6">Nucleus</location>
    </subcellularLocation>
</comment>
<comment type="domain">
    <text evidence="2">The DBINO region is involved in binding to DNA.</text>
</comment>
<comment type="similarity">
    <text evidence="8">Belongs to the SNF2/RAD54 helicase family.</text>
</comment>